<keyword id="KW-0002">3D-structure</keyword>
<keyword id="KW-0025">Alternative splicing</keyword>
<keyword id="KW-0963">Cytoplasm</keyword>
<keyword id="KW-1185">Reference proteome</keyword>
<keyword id="KW-0833">Ubl conjugation pathway</keyword>
<organism>
    <name type="scientific">Mus musculus</name>
    <name type="common">Mouse</name>
    <dbReference type="NCBI Taxonomy" id="10090"/>
    <lineage>
        <taxon>Eukaryota</taxon>
        <taxon>Metazoa</taxon>
        <taxon>Chordata</taxon>
        <taxon>Craniata</taxon>
        <taxon>Vertebrata</taxon>
        <taxon>Euteleostomi</taxon>
        <taxon>Mammalia</taxon>
        <taxon>Eutheria</taxon>
        <taxon>Euarchontoglires</taxon>
        <taxon>Glires</taxon>
        <taxon>Rodentia</taxon>
        <taxon>Myomorpha</taxon>
        <taxon>Muroidea</taxon>
        <taxon>Muridae</taxon>
        <taxon>Murinae</taxon>
        <taxon>Mus</taxon>
        <taxon>Mus</taxon>
    </lineage>
</organism>
<evidence type="ECO:0000250" key="1"/>
<evidence type="ECO:0000250" key="2">
    <source>
        <dbReference type="UniProtKB" id="Q99619"/>
    </source>
</evidence>
<evidence type="ECO:0000255" key="3">
    <source>
        <dbReference type="PROSITE-ProRule" id="PRU00194"/>
    </source>
</evidence>
<evidence type="ECO:0000255" key="4">
    <source>
        <dbReference type="PROSITE-ProRule" id="PRU00548"/>
    </source>
</evidence>
<evidence type="ECO:0000256" key="5">
    <source>
        <dbReference type="SAM" id="MobiDB-lite"/>
    </source>
</evidence>
<evidence type="ECO:0000269" key="6">
    <source>
    </source>
</evidence>
<evidence type="ECO:0000269" key="7">
    <source>
    </source>
</evidence>
<evidence type="ECO:0000269" key="8">
    <source>
    </source>
</evidence>
<evidence type="ECO:0000303" key="9">
    <source>
    </source>
</evidence>
<evidence type="ECO:0000305" key="10"/>
<evidence type="ECO:0007829" key="11">
    <source>
        <dbReference type="PDB" id="2AFJ"/>
    </source>
</evidence>
<evidence type="ECO:0007829" key="12">
    <source>
        <dbReference type="PDB" id="3EK9"/>
    </source>
</evidence>
<reference key="1">
    <citation type="journal article" date="1998" name="Genome Res.">
        <title>Comparative sequence analysis of a gene-rich cluster at human chromosome 12p13 and its syntenic region in mouse chromosome 6.</title>
        <authorList>
            <person name="Ansari-Lari M.A."/>
            <person name="Oeltjen J.C."/>
            <person name="Schwartz S."/>
            <person name="Zhang Z."/>
            <person name="Muzny D.M."/>
            <person name="Lu J."/>
            <person name="Gorrell J.H."/>
            <person name="Chinault A.C."/>
            <person name="Belmont J.W."/>
            <person name="Miller W."/>
            <person name="Gibbs R.A."/>
        </authorList>
    </citation>
    <scope>NUCLEOTIDE SEQUENCE [GENOMIC DNA]</scope>
</reference>
<reference key="2">
    <citation type="submission" date="2001-07" db="EMBL/GenBank/DDBJ databases">
        <title>SOCS box proteins.</title>
        <authorList>
            <person name="Friedel E.J."/>
            <person name="Nicholson S.E."/>
            <person name="Nicola N.A."/>
            <person name="Kile B.T."/>
            <person name="Hilton D.J."/>
        </authorList>
    </citation>
    <scope>NUCLEOTIDE SEQUENCE [MRNA] (ISOFORM 1)</scope>
</reference>
<reference key="3">
    <citation type="journal article" date="2005" name="Science">
        <title>The transcriptional landscape of the mammalian genome.</title>
        <authorList>
            <person name="Carninci P."/>
            <person name="Kasukawa T."/>
            <person name="Katayama S."/>
            <person name="Gough J."/>
            <person name="Frith M.C."/>
            <person name="Maeda N."/>
            <person name="Oyama R."/>
            <person name="Ravasi T."/>
            <person name="Lenhard B."/>
            <person name="Wells C."/>
            <person name="Kodzius R."/>
            <person name="Shimokawa K."/>
            <person name="Bajic V.B."/>
            <person name="Brenner S.E."/>
            <person name="Batalov S."/>
            <person name="Forrest A.R."/>
            <person name="Zavolan M."/>
            <person name="Davis M.J."/>
            <person name="Wilming L.G."/>
            <person name="Aidinis V."/>
            <person name="Allen J.E."/>
            <person name="Ambesi-Impiombato A."/>
            <person name="Apweiler R."/>
            <person name="Aturaliya R.N."/>
            <person name="Bailey T.L."/>
            <person name="Bansal M."/>
            <person name="Baxter L."/>
            <person name="Beisel K.W."/>
            <person name="Bersano T."/>
            <person name="Bono H."/>
            <person name="Chalk A.M."/>
            <person name="Chiu K.P."/>
            <person name="Choudhary V."/>
            <person name="Christoffels A."/>
            <person name="Clutterbuck D.R."/>
            <person name="Crowe M.L."/>
            <person name="Dalla E."/>
            <person name="Dalrymple B.P."/>
            <person name="de Bono B."/>
            <person name="Della Gatta G."/>
            <person name="di Bernardo D."/>
            <person name="Down T."/>
            <person name="Engstrom P."/>
            <person name="Fagiolini M."/>
            <person name="Faulkner G."/>
            <person name="Fletcher C.F."/>
            <person name="Fukushima T."/>
            <person name="Furuno M."/>
            <person name="Futaki S."/>
            <person name="Gariboldi M."/>
            <person name="Georgii-Hemming P."/>
            <person name="Gingeras T.R."/>
            <person name="Gojobori T."/>
            <person name="Green R.E."/>
            <person name="Gustincich S."/>
            <person name="Harbers M."/>
            <person name="Hayashi Y."/>
            <person name="Hensch T.K."/>
            <person name="Hirokawa N."/>
            <person name="Hill D."/>
            <person name="Huminiecki L."/>
            <person name="Iacono M."/>
            <person name="Ikeo K."/>
            <person name="Iwama A."/>
            <person name="Ishikawa T."/>
            <person name="Jakt M."/>
            <person name="Kanapin A."/>
            <person name="Katoh M."/>
            <person name="Kawasawa Y."/>
            <person name="Kelso J."/>
            <person name="Kitamura H."/>
            <person name="Kitano H."/>
            <person name="Kollias G."/>
            <person name="Krishnan S.P."/>
            <person name="Kruger A."/>
            <person name="Kummerfeld S.K."/>
            <person name="Kurochkin I.V."/>
            <person name="Lareau L.F."/>
            <person name="Lazarevic D."/>
            <person name="Lipovich L."/>
            <person name="Liu J."/>
            <person name="Liuni S."/>
            <person name="McWilliam S."/>
            <person name="Madan Babu M."/>
            <person name="Madera M."/>
            <person name="Marchionni L."/>
            <person name="Matsuda H."/>
            <person name="Matsuzawa S."/>
            <person name="Miki H."/>
            <person name="Mignone F."/>
            <person name="Miyake S."/>
            <person name="Morris K."/>
            <person name="Mottagui-Tabar S."/>
            <person name="Mulder N."/>
            <person name="Nakano N."/>
            <person name="Nakauchi H."/>
            <person name="Ng P."/>
            <person name="Nilsson R."/>
            <person name="Nishiguchi S."/>
            <person name="Nishikawa S."/>
            <person name="Nori F."/>
            <person name="Ohara O."/>
            <person name="Okazaki Y."/>
            <person name="Orlando V."/>
            <person name="Pang K.C."/>
            <person name="Pavan W.J."/>
            <person name="Pavesi G."/>
            <person name="Pesole G."/>
            <person name="Petrovsky N."/>
            <person name="Piazza S."/>
            <person name="Reed J."/>
            <person name="Reid J.F."/>
            <person name="Ring B.Z."/>
            <person name="Ringwald M."/>
            <person name="Rost B."/>
            <person name="Ruan Y."/>
            <person name="Salzberg S.L."/>
            <person name="Sandelin A."/>
            <person name="Schneider C."/>
            <person name="Schoenbach C."/>
            <person name="Sekiguchi K."/>
            <person name="Semple C.A."/>
            <person name="Seno S."/>
            <person name="Sessa L."/>
            <person name="Sheng Y."/>
            <person name="Shibata Y."/>
            <person name="Shimada H."/>
            <person name="Shimada K."/>
            <person name="Silva D."/>
            <person name="Sinclair B."/>
            <person name="Sperling S."/>
            <person name="Stupka E."/>
            <person name="Sugiura K."/>
            <person name="Sultana R."/>
            <person name="Takenaka Y."/>
            <person name="Taki K."/>
            <person name="Tammoja K."/>
            <person name="Tan S.L."/>
            <person name="Tang S."/>
            <person name="Taylor M.S."/>
            <person name="Tegner J."/>
            <person name="Teichmann S.A."/>
            <person name="Ueda H.R."/>
            <person name="van Nimwegen E."/>
            <person name="Verardo R."/>
            <person name="Wei C.L."/>
            <person name="Yagi K."/>
            <person name="Yamanishi H."/>
            <person name="Zabarovsky E."/>
            <person name="Zhu S."/>
            <person name="Zimmer A."/>
            <person name="Hide W."/>
            <person name="Bult C."/>
            <person name="Grimmond S.M."/>
            <person name="Teasdale R.D."/>
            <person name="Liu E.T."/>
            <person name="Brusic V."/>
            <person name="Quackenbush J."/>
            <person name="Wahlestedt C."/>
            <person name="Mattick J.S."/>
            <person name="Hume D.A."/>
            <person name="Kai C."/>
            <person name="Sasaki D."/>
            <person name="Tomaru Y."/>
            <person name="Fukuda S."/>
            <person name="Kanamori-Katayama M."/>
            <person name="Suzuki M."/>
            <person name="Aoki J."/>
            <person name="Arakawa T."/>
            <person name="Iida J."/>
            <person name="Imamura K."/>
            <person name="Itoh M."/>
            <person name="Kato T."/>
            <person name="Kawaji H."/>
            <person name="Kawagashira N."/>
            <person name="Kawashima T."/>
            <person name="Kojima M."/>
            <person name="Kondo S."/>
            <person name="Konno H."/>
            <person name="Nakano K."/>
            <person name="Ninomiya N."/>
            <person name="Nishio T."/>
            <person name="Okada M."/>
            <person name="Plessy C."/>
            <person name="Shibata K."/>
            <person name="Shiraki T."/>
            <person name="Suzuki S."/>
            <person name="Tagami M."/>
            <person name="Waki K."/>
            <person name="Watahiki A."/>
            <person name="Okamura-Oho Y."/>
            <person name="Suzuki H."/>
            <person name="Kawai J."/>
            <person name="Hayashizaki Y."/>
        </authorList>
    </citation>
    <scope>NUCLEOTIDE SEQUENCE [LARGE SCALE MRNA] (ISOFORM 1)</scope>
    <source>
        <strain>C57BL/6J</strain>
        <tissue>Bone</tissue>
    </source>
</reference>
<reference key="4">
    <citation type="journal article" date="2004" name="Genome Res.">
        <title>The status, quality, and expansion of the NIH full-length cDNA project: the Mammalian Gene Collection (MGC).</title>
        <authorList>
            <consortium name="The MGC Project Team"/>
        </authorList>
    </citation>
    <scope>NUCLEOTIDE SEQUENCE [LARGE SCALE MRNA] (ISOFORMS 1 AND 2)</scope>
    <source>
        <strain>FVB/N</strain>
        <tissue>Mammary gland</tissue>
        <tissue>Mammary tumor</tissue>
    </source>
</reference>
<reference key="5">
    <citation type="journal article" date="2010" name="J. Cell Biol.">
        <title>The SPRY domain-containing SOCS box protein SPSB2 targets iNOS for proteasomal degradation.</title>
        <authorList>
            <person name="Kuang Z."/>
            <person name="Lewis R.S."/>
            <person name="Curtis J.M."/>
            <person name="Zhan Y."/>
            <person name="Saunders B.M."/>
            <person name="Babon J.J."/>
            <person name="Kolesnik T.B."/>
            <person name="Low A."/>
            <person name="Masters S.L."/>
            <person name="Willson T.A."/>
            <person name="Kedzierski L."/>
            <person name="Yao S."/>
            <person name="Handman E."/>
            <person name="Norton R.S."/>
            <person name="Nicholson S.E."/>
        </authorList>
    </citation>
    <scope>FUNCTION</scope>
    <scope>INTERACTION WITH NOS2</scope>
    <scope>MUTAGENESIS OF 100-ARG-GLY-101; 102-THR-HIS-103; 118-ASP-HIS-119; TYR-120; 123-LEU--GLY-125; 126-SER--SER-128; 160-GLN-LEU-161; VAL-206 AND TRP-207</scope>
</reference>
<reference key="6">
    <citation type="journal article" date="2010" name="J. Mol. Biol.">
        <title>Structural basis for Par-4 recognition by the SPRY domain- and SOCS box-containing proteins SPSB1, SPSB2, and SPSB4.</title>
        <authorList>
            <person name="Filippakopoulos P."/>
            <person name="Low A."/>
            <person name="Sharpe T.D."/>
            <person name="Uppenberg J."/>
            <person name="Yao S."/>
            <person name="Kuang Z."/>
            <person name="Savitsky P."/>
            <person name="Lewis R.S."/>
            <person name="Nicholson S.E."/>
            <person name="Norton R.S."/>
            <person name="Bullock A.N."/>
        </authorList>
    </citation>
    <scope>INTERACTION WITH PAWR</scope>
    <scope>MUTAGENESIS OF TYR-120; 123-LEU--GLY-125; 126-SER--SER-128; THR-198 AND VAL-206</scope>
</reference>
<reference key="7">
    <citation type="journal article" date="2006" name="Nat. Struct. Mol. Biol.">
        <title>The SPRY domain of SSB-2 adopts a novel fold that presents conserved Par-4-binding residues.</title>
        <authorList>
            <person name="Masters S.L."/>
            <person name="Yao S."/>
            <person name="Willson T.A."/>
            <person name="Zhang J.-G."/>
            <person name="Palmer K.R."/>
            <person name="Smith B.J."/>
            <person name="Babon J.J."/>
            <person name="Nicola N.A."/>
            <person name="Norton R.S."/>
            <person name="Nicholson S.E."/>
        </authorList>
    </citation>
    <scope>STRUCTURE BY NMR OF 12-224</scope>
    <scope>INTERACTION WITH PAWR AND MET</scope>
    <scope>MUTAGENESIS OF TYR-120; 123-LEU--GLY-125; 141-TYR--GLN-143; 151-GLN-TYR-152; 188-GLY-PRO-189 AND VAL-206</scope>
</reference>
<proteinExistence type="evidence at protein level"/>
<name>SPSB2_MOUSE</name>
<accession>O88838</accession>
<accession>Q8CBA5</accession>
<accession>Q91Z15</accession>
<protein>
    <recommendedName>
        <fullName>SPRY domain-containing SOCS box protein 2</fullName>
        <shortName>SSB-2</shortName>
    </recommendedName>
    <alternativeName>
        <fullName>Gene-rich cluster protein C9</fullName>
    </alternativeName>
</protein>
<dbReference type="EMBL" id="AC002397">
    <property type="protein sequence ID" value="AAC36017.1"/>
    <property type="molecule type" value="Genomic_DNA"/>
</dbReference>
<dbReference type="EMBL" id="AF403037">
    <property type="protein sequence ID" value="AAL57356.1"/>
    <property type="molecule type" value="mRNA"/>
</dbReference>
<dbReference type="EMBL" id="AK036451">
    <property type="protein sequence ID" value="BAC29435.1"/>
    <property type="molecule type" value="mRNA"/>
</dbReference>
<dbReference type="EMBL" id="AK148177">
    <property type="protein sequence ID" value="BAE28397.1"/>
    <property type="molecule type" value="mRNA"/>
</dbReference>
<dbReference type="EMBL" id="BC002005">
    <property type="protein sequence ID" value="AAH02005.1"/>
    <property type="molecule type" value="mRNA"/>
</dbReference>
<dbReference type="EMBL" id="BC010305">
    <property type="protein sequence ID" value="AAH10305.1"/>
    <property type="molecule type" value="mRNA"/>
</dbReference>
<dbReference type="CCDS" id="CCDS20529.1">
    <molecule id="O88838-1"/>
</dbReference>
<dbReference type="RefSeq" id="NP_001292979.1">
    <molecule id="O88838-1"/>
    <property type="nucleotide sequence ID" value="NM_001306050.2"/>
</dbReference>
<dbReference type="RefSeq" id="NP_001292980.1">
    <molecule id="O88838-1"/>
    <property type="nucleotide sequence ID" value="NM_001306051.2"/>
</dbReference>
<dbReference type="RefSeq" id="NP_001292981.1">
    <molecule id="O88838-1"/>
    <property type="nucleotide sequence ID" value="NM_001306052.2"/>
</dbReference>
<dbReference type="RefSeq" id="NP_001292982.1">
    <property type="nucleotide sequence ID" value="NM_001306053.1"/>
</dbReference>
<dbReference type="RefSeq" id="NP_001396815.1">
    <molecule id="O88838-1"/>
    <property type="nucleotide sequence ID" value="NM_001409886.1"/>
</dbReference>
<dbReference type="RefSeq" id="NP_001396816.1">
    <molecule id="O88838-1"/>
    <property type="nucleotide sequence ID" value="NM_001409887.1"/>
</dbReference>
<dbReference type="RefSeq" id="NP_038567.1">
    <molecule id="O88838-1"/>
    <property type="nucleotide sequence ID" value="NM_013539.3"/>
</dbReference>
<dbReference type="RefSeq" id="XP_006505630.1">
    <property type="nucleotide sequence ID" value="XM_006505567.3"/>
</dbReference>
<dbReference type="PDB" id="2AFJ">
    <property type="method" value="NMR"/>
    <property type="chains" value="A=12-224"/>
</dbReference>
<dbReference type="PDB" id="3EK9">
    <property type="method" value="X-ray"/>
    <property type="resolution" value="2.60 A"/>
    <property type="chains" value="A=12-224"/>
</dbReference>
<dbReference type="PDBsum" id="2AFJ"/>
<dbReference type="PDBsum" id="3EK9"/>
<dbReference type="BMRB" id="O88838"/>
<dbReference type="SMR" id="O88838"/>
<dbReference type="BioGRID" id="200055">
    <property type="interactions" value="1"/>
</dbReference>
<dbReference type="DIP" id="DIP-29001N"/>
<dbReference type="FunCoup" id="O88838">
    <property type="interactions" value="17"/>
</dbReference>
<dbReference type="IntAct" id="O88838">
    <property type="interactions" value="2"/>
</dbReference>
<dbReference type="STRING" id="10090.ENSMUSP00000060124"/>
<dbReference type="BindingDB" id="O88838"/>
<dbReference type="ChEMBL" id="CHEMBL3325309"/>
<dbReference type="PhosphoSitePlus" id="O88838"/>
<dbReference type="PaxDb" id="10090-ENSMUSP00000060124"/>
<dbReference type="ProteomicsDB" id="261634">
    <molecule id="O88838-1"/>
</dbReference>
<dbReference type="ProteomicsDB" id="261635">
    <molecule id="O88838-2"/>
</dbReference>
<dbReference type="Pumba" id="O88838"/>
<dbReference type="Antibodypedia" id="11257">
    <property type="antibodies" value="95 antibodies from 20 providers"/>
</dbReference>
<dbReference type="DNASU" id="14794"/>
<dbReference type="Ensembl" id="ENSMUST00000047760.10">
    <molecule id="O88838-1"/>
    <property type="protein sequence ID" value="ENSMUSP00000041585.4"/>
    <property type="gene ID" value="ENSMUSG00000038451.14"/>
</dbReference>
<dbReference type="Ensembl" id="ENSMUST00000052727.5">
    <molecule id="O88838-1"/>
    <property type="protein sequence ID" value="ENSMUSP00000060124.5"/>
    <property type="gene ID" value="ENSMUSG00000038451.14"/>
</dbReference>
<dbReference type="Ensembl" id="ENSMUST00000112473.2">
    <molecule id="O88838-2"/>
    <property type="protein sequence ID" value="ENSMUSP00000108092.2"/>
    <property type="gene ID" value="ENSMUSG00000038451.14"/>
</dbReference>
<dbReference type="GeneID" id="14794"/>
<dbReference type="KEGG" id="mmu:14794"/>
<dbReference type="UCSC" id="uc009drw.1">
    <molecule id="O88838-1"/>
    <property type="organism name" value="mouse"/>
</dbReference>
<dbReference type="AGR" id="MGI:1315199"/>
<dbReference type="CTD" id="84727"/>
<dbReference type="MGI" id="MGI:1315199">
    <property type="gene designation" value="Spsb2"/>
</dbReference>
<dbReference type="VEuPathDB" id="HostDB:ENSMUSG00000038451"/>
<dbReference type="eggNOG" id="KOG3953">
    <property type="taxonomic scope" value="Eukaryota"/>
</dbReference>
<dbReference type="GeneTree" id="ENSGT01030000234629"/>
<dbReference type="InParanoid" id="O88838"/>
<dbReference type="OMA" id="HAWEIGW"/>
<dbReference type="OrthoDB" id="5547302at2759"/>
<dbReference type="PhylomeDB" id="O88838"/>
<dbReference type="TreeFam" id="TF312822"/>
<dbReference type="Reactome" id="R-MMU-8951664">
    <property type="pathway name" value="Neddylation"/>
</dbReference>
<dbReference type="Reactome" id="R-MMU-983168">
    <property type="pathway name" value="Antigen processing: Ubiquitination &amp; Proteasome degradation"/>
</dbReference>
<dbReference type="UniPathway" id="UPA00143"/>
<dbReference type="BioGRID-ORCS" id="14794">
    <property type="hits" value="2 hits in 77 CRISPR screens"/>
</dbReference>
<dbReference type="ChiTaRS" id="Nabp1">
    <property type="organism name" value="mouse"/>
</dbReference>
<dbReference type="EvolutionaryTrace" id="O88838"/>
<dbReference type="PRO" id="PR:O88838"/>
<dbReference type="Proteomes" id="UP000000589">
    <property type="component" value="Chromosome 6"/>
</dbReference>
<dbReference type="RNAct" id="O88838">
    <property type="molecule type" value="protein"/>
</dbReference>
<dbReference type="Bgee" id="ENSMUSG00000038451">
    <property type="expression patterns" value="Expressed in granulocyte and 160 other cell types or tissues"/>
</dbReference>
<dbReference type="ExpressionAtlas" id="O88838">
    <property type="expression patterns" value="baseline and differential"/>
</dbReference>
<dbReference type="GO" id="GO:0005829">
    <property type="term" value="C:cytosol"/>
    <property type="evidence" value="ECO:0000250"/>
    <property type="project" value="UniProtKB"/>
</dbReference>
<dbReference type="GO" id="GO:1990756">
    <property type="term" value="F:ubiquitin-like ligase-substrate adaptor activity"/>
    <property type="evidence" value="ECO:0007669"/>
    <property type="project" value="Ensembl"/>
</dbReference>
<dbReference type="GO" id="GO:0035556">
    <property type="term" value="P:intracellular signal transduction"/>
    <property type="evidence" value="ECO:0007669"/>
    <property type="project" value="InterPro"/>
</dbReference>
<dbReference type="GO" id="GO:0016567">
    <property type="term" value="P:protein ubiquitination"/>
    <property type="evidence" value="ECO:0000314"/>
    <property type="project" value="UniProtKB"/>
</dbReference>
<dbReference type="GO" id="GO:0006511">
    <property type="term" value="P:ubiquitin-dependent protein catabolic process"/>
    <property type="evidence" value="ECO:0000315"/>
    <property type="project" value="UniProtKB"/>
</dbReference>
<dbReference type="CDD" id="cd03719">
    <property type="entry name" value="SOCS_SSB2"/>
    <property type="match status" value="1"/>
</dbReference>
<dbReference type="CDD" id="cd12906">
    <property type="entry name" value="SPRY_SOCS1-2-4"/>
    <property type="match status" value="1"/>
</dbReference>
<dbReference type="FunFam" id="1.10.750.20:FF:000001">
    <property type="entry name" value="Ankyrin repeat and SOCS box containing 1"/>
    <property type="match status" value="1"/>
</dbReference>
<dbReference type="FunFam" id="2.60.120.920:FF:000048">
    <property type="entry name" value="SPRY domain-containing SOCS box protein 2"/>
    <property type="match status" value="1"/>
</dbReference>
<dbReference type="Gene3D" id="2.60.120.920">
    <property type="match status" value="1"/>
</dbReference>
<dbReference type="Gene3D" id="1.10.750.20">
    <property type="entry name" value="SOCS box"/>
    <property type="match status" value="1"/>
</dbReference>
<dbReference type="InterPro" id="IPR001870">
    <property type="entry name" value="B30.2/SPRY"/>
</dbReference>
<dbReference type="InterPro" id="IPR043136">
    <property type="entry name" value="B30.2/SPRY_sf"/>
</dbReference>
<dbReference type="InterPro" id="IPR013320">
    <property type="entry name" value="ConA-like_dom_sf"/>
</dbReference>
<dbReference type="InterPro" id="IPR050672">
    <property type="entry name" value="FBXO45-Fsn/SPSB_families"/>
</dbReference>
<dbReference type="InterPro" id="IPR001496">
    <property type="entry name" value="SOCS_box"/>
</dbReference>
<dbReference type="InterPro" id="IPR036036">
    <property type="entry name" value="SOCS_box-like_dom_sf"/>
</dbReference>
<dbReference type="InterPro" id="IPR003877">
    <property type="entry name" value="SPRY_dom"/>
</dbReference>
<dbReference type="InterPro" id="IPR037340">
    <property type="entry name" value="SSB2_SOCS"/>
</dbReference>
<dbReference type="PANTHER" id="PTHR12245">
    <property type="entry name" value="SPRY DOMAIN CONTAINING SOCS BOX PROTEIN"/>
    <property type="match status" value="1"/>
</dbReference>
<dbReference type="PANTHER" id="PTHR12245:SF2">
    <property type="entry name" value="SPRY DOMAIN-CONTAINING SOCS BOX PROTEIN 2"/>
    <property type="match status" value="1"/>
</dbReference>
<dbReference type="Pfam" id="PF07525">
    <property type="entry name" value="SOCS_box"/>
    <property type="match status" value="1"/>
</dbReference>
<dbReference type="Pfam" id="PF00622">
    <property type="entry name" value="SPRY"/>
    <property type="match status" value="1"/>
</dbReference>
<dbReference type="SMART" id="SM00253">
    <property type="entry name" value="SOCS"/>
    <property type="match status" value="1"/>
</dbReference>
<dbReference type="SMART" id="SM00969">
    <property type="entry name" value="SOCS_box"/>
    <property type="match status" value="1"/>
</dbReference>
<dbReference type="SMART" id="SM00449">
    <property type="entry name" value="SPRY"/>
    <property type="match status" value="1"/>
</dbReference>
<dbReference type="SUPFAM" id="SSF49899">
    <property type="entry name" value="Concanavalin A-like lectins/glucanases"/>
    <property type="match status" value="1"/>
</dbReference>
<dbReference type="SUPFAM" id="SSF158235">
    <property type="entry name" value="SOCS box-like"/>
    <property type="match status" value="1"/>
</dbReference>
<dbReference type="PROSITE" id="PS50188">
    <property type="entry name" value="B302_SPRY"/>
    <property type="match status" value="1"/>
</dbReference>
<dbReference type="PROSITE" id="PS50225">
    <property type="entry name" value="SOCS"/>
    <property type="match status" value="1"/>
</dbReference>
<feature type="chain" id="PRO_0000238475" description="SPRY domain-containing SOCS box protein 2">
    <location>
        <begin position="1"/>
        <end position="264"/>
    </location>
</feature>
<feature type="domain" description="B30.2/SPRY" evidence="4">
    <location>
        <begin position="26"/>
        <end position="221"/>
    </location>
</feature>
<feature type="domain" description="SOCS box" evidence="3">
    <location>
        <begin position="222"/>
        <end position="264"/>
    </location>
</feature>
<feature type="region of interest" description="Disordered" evidence="5">
    <location>
        <begin position="1"/>
        <end position="34"/>
    </location>
</feature>
<feature type="compositionally biased region" description="Polar residues" evidence="5">
    <location>
        <begin position="1"/>
        <end position="19"/>
    </location>
</feature>
<feature type="splice variant" id="VSP_018613" description="In isoform 2." evidence="9">
    <original>VEEPQSLLHLSRLCVRHALGDTRLGQISTLPLPPAMKRYLLYK</original>
    <variation>GEIRTRCGEITTLGNGLGWKLMVGAQEVGFLSLWPVT</variation>
    <location>
        <begin position="222"/>
        <end position="264"/>
    </location>
</feature>
<feature type="mutagenesis site" description="Loss of interaction with NOS2." evidence="8">
    <original>RG</original>
    <variation>AA</variation>
    <location>
        <begin position="100"/>
        <end position="101"/>
    </location>
</feature>
<feature type="mutagenesis site" description="Significant loss of interaction with NOS2." evidence="8">
    <original>TH</original>
    <variation>AA</variation>
    <location>
        <begin position="102"/>
        <end position="103"/>
    </location>
</feature>
<feature type="mutagenesis site" description="No loss of interaction with NOS2." evidence="8">
    <original>DH</original>
    <variation>AA</variation>
    <location>
        <begin position="118"/>
        <end position="119"/>
    </location>
</feature>
<feature type="mutagenesis site" description="Loss of interaction with PARW. No effect on interaction with MET. Loss of interaction with NOS2." evidence="6 7 8">
    <original>Y</original>
    <variation>A</variation>
    <location>
        <position position="120"/>
    </location>
</feature>
<feature type="mutagenesis site" description="Loss of interaction with NOS2." evidence="8">
    <original>Y</original>
    <variation>F</variation>
    <location>
        <position position="120"/>
    </location>
</feature>
<feature type="mutagenesis site" description="Loss of interaction with MET and PARW. Loss of interaction with NOS2." evidence="6 7 8">
    <original>LLG</original>
    <variation>AAA</variation>
    <location>
        <begin position="123"/>
        <end position="125"/>
    </location>
</feature>
<feature type="mutagenesis site" description="Loss of interaction with PAWR. Significant loss of interaction with NOS2." evidence="7 8">
    <original>SNS</original>
    <variation>AAA</variation>
    <location>
        <begin position="126"/>
        <end position="128"/>
    </location>
</feature>
<feature type="mutagenesis site" description="Strongly reduced interaction with MET and PARW." evidence="6">
    <original>YHQ</original>
    <variation>AAA</variation>
    <location>
        <begin position="141"/>
        <end position="143"/>
    </location>
</feature>
<feature type="mutagenesis site" description="Loss of interaction with MET and PARW." evidence="6">
    <original>QY</original>
    <variation>AA</variation>
    <location>
        <begin position="151"/>
        <end position="152"/>
    </location>
</feature>
<feature type="mutagenesis site" description="No loss of interaction with NOS2." evidence="8">
    <original>QL</original>
    <variation>AA</variation>
    <location>
        <begin position="160"/>
        <end position="161"/>
    </location>
</feature>
<feature type="mutagenesis site" description="Strongly reduced interaction with MET. Loss of interaction with PARW." evidence="6">
    <original>GP</original>
    <variation>AA</variation>
    <location>
        <begin position="188"/>
        <end position="189"/>
    </location>
</feature>
<feature type="mutagenesis site" description="No loss of interaction with PAWR." evidence="7">
    <original>T</original>
    <variation>A</variation>
    <location>
        <position position="198"/>
    </location>
</feature>
<feature type="mutagenesis site" description="Loss of interaction with PARW. No effect on interaction with MET. Loss of interaction with NOS2." evidence="6 7 8">
    <original>V</original>
    <variation>A</variation>
    <location>
        <position position="206"/>
    </location>
</feature>
<feature type="mutagenesis site" description="Significant loss of interaction with NOS2." evidence="8">
    <original>W</original>
    <variation>A</variation>
    <location>
        <position position="207"/>
    </location>
</feature>
<feature type="helix" evidence="12">
    <location>
        <begin position="29"/>
        <end position="34"/>
    </location>
</feature>
<feature type="helix" evidence="12">
    <location>
        <begin position="40"/>
        <end position="45"/>
    </location>
</feature>
<feature type="strand" evidence="12">
    <location>
        <begin position="47"/>
        <end position="53"/>
    </location>
</feature>
<feature type="strand" evidence="12">
    <location>
        <begin position="57"/>
        <end position="60"/>
    </location>
</feature>
<feature type="helix" evidence="12">
    <location>
        <begin position="61"/>
        <end position="63"/>
    </location>
</feature>
<feature type="strand" evidence="12">
    <location>
        <begin position="65"/>
        <end position="68"/>
    </location>
</feature>
<feature type="turn" evidence="11">
    <location>
        <begin position="72"/>
        <end position="74"/>
    </location>
</feature>
<feature type="strand" evidence="12">
    <location>
        <begin position="75"/>
        <end position="81"/>
    </location>
</feature>
<feature type="strand" evidence="12">
    <location>
        <begin position="84"/>
        <end position="94"/>
    </location>
</feature>
<feature type="helix" evidence="12">
    <location>
        <begin position="97"/>
        <end position="99"/>
    </location>
</feature>
<feature type="strand" evidence="12">
    <location>
        <begin position="105"/>
        <end position="109"/>
    </location>
</feature>
<feature type="strand" evidence="12">
    <location>
        <begin position="116"/>
        <end position="119"/>
    </location>
</feature>
<feature type="strand" evidence="12">
    <location>
        <begin position="130"/>
        <end position="134"/>
    </location>
</feature>
<feature type="turn" evidence="12">
    <location>
        <begin position="135"/>
        <end position="137"/>
    </location>
</feature>
<feature type="strand" evidence="12">
    <location>
        <begin position="139"/>
        <end position="143"/>
    </location>
</feature>
<feature type="strand" evidence="11">
    <location>
        <begin position="150"/>
        <end position="153"/>
    </location>
</feature>
<feature type="helix" evidence="11">
    <location>
        <begin position="157"/>
        <end position="160"/>
    </location>
</feature>
<feature type="strand" evidence="12">
    <location>
        <begin position="165"/>
        <end position="172"/>
    </location>
</feature>
<feature type="turn" evidence="12">
    <location>
        <begin position="173"/>
        <end position="176"/>
    </location>
</feature>
<feature type="strand" evidence="12">
    <location>
        <begin position="177"/>
        <end position="182"/>
    </location>
</feature>
<feature type="strand" evidence="12">
    <location>
        <begin position="185"/>
        <end position="191"/>
    </location>
</feature>
<feature type="strand" evidence="12">
    <location>
        <begin position="199"/>
        <end position="205"/>
    </location>
</feature>
<feature type="strand" evidence="12">
    <location>
        <begin position="212"/>
        <end position="218"/>
    </location>
</feature>
<gene>
    <name type="primary">Spsb2</name>
    <name type="synonym">Grcc9</name>
    <name type="synonym">Ssb2</name>
</gene>
<comment type="function">
    <text evidence="2 8">Substrate recognition component of a SCF-like ECS (Elongin BC-CUL2/5-SOCS-box protein) E3 ubiquitin-protein ligase complex which mediates the ubiquitination and subsequent proteasomal degradation of target proteins (PubMed:20603330). Negatively regulates nitric oxide (NO) production and limits cellular toxicity in activated macrophages by mediating the ubiquitination and proteasomal degradation of NOS2 (PubMed:20603330). Acts as a bridge which links NOS2 with the ECS E3 ubiquitin ligase complex components ELOC and CUL5 (By similarity).</text>
</comment>
<comment type="pathway">
    <text>Protein modification; protein ubiquitination.</text>
</comment>
<comment type="subunit">
    <text evidence="2 6 7 8">Component of the probable ECS(SPSB2) E3 ubiquitin-protein ligase complex which contains CUL5, RNF7/RBX2, Elongin BC complex and SPSB2 (By similarity). Interacts with CUL5, RNF7, ELOB and ELOC (By similarity). Interacts with MET (PubMed:16369487). Interacts (via B30.2/SPRY domain) with PAWR; this interaction occurs in association with the Elongin BC complex (PubMed:16369487, PubMed:20561531). Interacts with NOS2.</text>
</comment>
<comment type="interaction">
    <interactant intactId="EBI-8820410">
        <id>O88838</id>
    </interactant>
    <interactant intactId="EBI-595869">
        <id>Q96IZ0</id>
        <label>PAWR</label>
    </interactant>
    <organismsDiffer>true</organismsDiffer>
    <experiments>6</experiments>
</comment>
<comment type="subcellular location">
    <subcellularLocation>
        <location evidence="10">Cytoplasm</location>
    </subcellularLocation>
    <subcellularLocation>
        <location evidence="2">Cytoplasm</location>
        <location evidence="2">Cytosol</location>
    </subcellularLocation>
    <text evidence="2">Exhibits a diffuse cytosolic localization.</text>
</comment>
<comment type="alternative products">
    <event type="alternative splicing"/>
    <isoform>
        <id>O88838-1</id>
        <name>1</name>
        <sequence type="displayed"/>
    </isoform>
    <isoform>
        <id>O88838-2</id>
        <name>2</name>
        <sequence type="described" ref="VSP_018613"/>
    </isoform>
</comment>
<comment type="domain">
    <text evidence="1 2">The SOCS box domain mediates the interaction with the Elongin BC complex, an adapter module in different E3 ubiquitin ligase complexes (By similarity). Essential for its ability to link NOS2 and the ECS E3 ubiquitin ligase complex components ELOC and CUL5 (By similarity).</text>
</comment>
<comment type="similarity">
    <text evidence="10">Belongs to the SPSB family.</text>
</comment>
<sequence>MGQTALARGSSSTPTSQALYSDFSPPEGLEELLSAPPPDLVAQRHHGWNPKDCSENIDVKEGGLCFERRPVAQSTDGVRGKRGYSRGLHAWEISWPLEQRGTHAVVGVATALAPLQADHYAALLGSNSESWGWDIGRGKLYHQSKGLEAPQYPAGPQGEQLVVPERLLVVLDMEEGTLGYSIGGTYLGPAFRGLKGRTLYPSVSAVWGQCQVRIRYMGERRVEEPQSLLHLSRLCVRHALGDTRLGQISTLPLPPAMKRYLLYK</sequence>